<keyword id="KW-0479">Metal-binding</keyword>
<keyword id="KW-0665">Pyrimidine biosynthesis</keyword>
<keyword id="KW-0862">Zinc</keyword>
<protein>
    <recommendedName>
        <fullName evidence="1">Aspartate carbamoyltransferase regulatory chain</fullName>
    </recommendedName>
</protein>
<comment type="function">
    <text evidence="1">Involved in allosteric regulation of aspartate carbamoyltransferase.</text>
</comment>
<comment type="cofactor">
    <cofactor evidence="1">
        <name>Zn(2+)</name>
        <dbReference type="ChEBI" id="CHEBI:29105"/>
    </cofactor>
    <text evidence="1">Binds 1 zinc ion per subunit.</text>
</comment>
<comment type="subunit">
    <text evidence="1">Contains catalytic and regulatory chains.</text>
</comment>
<comment type="similarity">
    <text evidence="1">Belongs to the PyrI family.</text>
</comment>
<dbReference type="EMBL" id="CP000627">
    <property type="protein sequence ID" value="ABQ19857.1"/>
    <property type="molecule type" value="Genomic_DNA"/>
</dbReference>
<dbReference type="EMBL" id="CP001235">
    <property type="protein sequence ID" value="ACP10611.1"/>
    <property type="molecule type" value="Genomic_DNA"/>
</dbReference>
<dbReference type="RefSeq" id="WP_000032505.1">
    <property type="nucleotide sequence ID" value="NZ_JAACZH010000021.1"/>
</dbReference>
<dbReference type="SMR" id="A5F5D0"/>
<dbReference type="KEGG" id="vco:VC0395_A2093"/>
<dbReference type="KEGG" id="vcr:VC395_2625"/>
<dbReference type="PATRIC" id="fig|345073.21.peg.2527"/>
<dbReference type="eggNOG" id="COG1781">
    <property type="taxonomic scope" value="Bacteria"/>
</dbReference>
<dbReference type="HOGENOM" id="CLU_128576_0_0_6"/>
<dbReference type="OrthoDB" id="5599321at2"/>
<dbReference type="Proteomes" id="UP000000249">
    <property type="component" value="Chromosome 2"/>
</dbReference>
<dbReference type="GO" id="GO:0009347">
    <property type="term" value="C:aspartate carbamoyltransferase complex"/>
    <property type="evidence" value="ECO:0007669"/>
    <property type="project" value="InterPro"/>
</dbReference>
<dbReference type="GO" id="GO:0046872">
    <property type="term" value="F:metal ion binding"/>
    <property type="evidence" value="ECO:0007669"/>
    <property type="project" value="UniProtKB-KW"/>
</dbReference>
<dbReference type="GO" id="GO:0006207">
    <property type="term" value="P:'de novo' pyrimidine nucleobase biosynthetic process"/>
    <property type="evidence" value="ECO:0007669"/>
    <property type="project" value="InterPro"/>
</dbReference>
<dbReference type="GO" id="GO:0006221">
    <property type="term" value="P:pyrimidine nucleotide biosynthetic process"/>
    <property type="evidence" value="ECO:0007669"/>
    <property type="project" value="UniProtKB-UniRule"/>
</dbReference>
<dbReference type="Gene3D" id="2.30.30.20">
    <property type="entry name" value="Aspartate carbamoyltransferase regulatory subunit, C-terminal domain"/>
    <property type="match status" value="1"/>
</dbReference>
<dbReference type="Gene3D" id="3.30.70.140">
    <property type="entry name" value="Aspartate carbamoyltransferase regulatory subunit, N-terminal domain"/>
    <property type="match status" value="1"/>
</dbReference>
<dbReference type="HAMAP" id="MF_00002">
    <property type="entry name" value="Asp_carb_tr_reg"/>
    <property type="match status" value="1"/>
</dbReference>
<dbReference type="InterPro" id="IPR020545">
    <property type="entry name" value="Asp_carbamoyltransf_reg_N"/>
</dbReference>
<dbReference type="InterPro" id="IPR002801">
    <property type="entry name" value="Asp_carbamoylTrfase_reg"/>
</dbReference>
<dbReference type="InterPro" id="IPR020542">
    <property type="entry name" value="Asp_carbamoyltrfase_reg_C"/>
</dbReference>
<dbReference type="InterPro" id="IPR036792">
    <property type="entry name" value="Asp_carbatrfase_reg_C_sf"/>
</dbReference>
<dbReference type="InterPro" id="IPR036793">
    <property type="entry name" value="Asp_carbatrfase_reg_N_sf"/>
</dbReference>
<dbReference type="NCBIfam" id="TIGR00240">
    <property type="entry name" value="ATCase_reg"/>
    <property type="match status" value="1"/>
</dbReference>
<dbReference type="PANTHER" id="PTHR35805">
    <property type="entry name" value="ASPARTATE CARBAMOYLTRANSFERASE REGULATORY CHAIN"/>
    <property type="match status" value="1"/>
</dbReference>
<dbReference type="PANTHER" id="PTHR35805:SF1">
    <property type="entry name" value="ASPARTATE CARBAMOYLTRANSFERASE REGULATORY CHAIN"/>
    <property type="match status" value="1"/>
</dbReference>
<dbReference type="Pfam" id="PF01948">
    <property type="entry name" value="PyrI"/>
    <property type="match status" value="1"/>
</dbReference>
<dbReference type="Pfam" id="PF02748">
    <property type="entry name" value="PyrI_C"/>
    <property type="match status" value="1"/>
</dbReference>
<dbReference type="SUPFAM" id="SSF57825">
    <property type="entry name" value="Aspartate carbamoyltransferase, Regulatory-chain, C-terminal domain"/>
    <property type="match status" value="1"/>
</dbReference>
<dbReference type="SUPFAM" id="SSF54893">
    <property type="entry name" value="Aspartate carbamoyltransferase, Regulatory-chain, N-terminal domain"/>
    <property type="match status" value="1"/>
</dbReference>
<proteinExistence type="inferred from homology"/>
<reference key="1">
    <citation type="submission" date="2007-03" db="EMBL/GenBank/DDBJ databases">
        <authorList>
            <person name="Heidelberg J."/>
        </authorList>
    </citation>
    <scope>NUCLEOTIDE SEQUENCE [LARGE SCALE GENOMIC DNA]</scope>
    <source>
        <strain>ATCC 39541 / Classical Ogawa 395 / O395</strain>
    </source>
</reference>
<reference key="2">
    <citation type="journal article" date="2008" name="PLoS ONE">
        <title>A recalibrated molecular clock and independent origins for the cholera pandemic clones.</title>
        <authorList>
            <person name="Feng L."/>
            <person name="Reeves P.R."/>
            <person name="Lan R."/>
            <person name="Ren Y."/>
            <person name="Gao C."/>
            <person name="Zhou Z."/>
            <person name="Ren Y."/>
            <person name="Cheng J."/>
            <person name="Wang W."/>
            <person name="Wang J."/>
            <person name="Qian W."/>
            <person name="Li D."/>
            <person name="Wang L."/>
        </authorList>
    </citation>
    <scope>NUCLEOTIDE SEQUENCE [LARGE SCALE GENOMIC DNA]</scope>
    <source>
        <strain>ATCC 39541 / Classical Ogawa 395 / O395</strain>
    </source>
</reference>
<gene>
    <name evidence="1" type="primary">pyrI</name>
    <name type="ordered locus">VC0395_A2093</name>
    <name type="ordered locus">VC395_2625</name>
</gene>
<accession>A5F5D0</accession>
<accession>C3M500</accession>
<organism>
    <name type="scientific">Vibrio cholerae serotype O1 (strain ATCC 39541 / Classical Ogawa 395 / O395)</name>
    <dbReference type="NCBI Taxonomy" id="345073"/>
    <lineage>
        <taxon>Bacteria</taxon>
        <taxon>Pseudomonadati</taxon>
        <taxon>Pseudomonadota</taxon>
        <taxon>Gammaproteobacteria</taxon>
        <taxon>Vibrionales</taxon>
        <taxon>Vibrionaceae</taxon>
        <taxon>Vibrio</taxon>
    </lineage>
</organism>
<evidence type="ECO:0000255" key="1">
    <source>
        <dbReference type="HAMAP-Rule" id="MF_00002"/>
    </source>
</evidence>
<sequence>MSKETKLQVEAIKNGTVIDHIPAKVGIKVLKLFDMHNSTQRVTIGLNLPSSALGSKDLLKIENVFISEAQASKLALYAPHATVNQIENYEVVKKLALQLPERINNVFACPNSNCISHNEPVESSFKLSEKNNDIRLKCKYCEKVFARDVVTEIEA</sequence>
<feature type="chain" id="PRO_1000070902" description="Aspartate carbamoyltransferase regulatory chain">
    <location>
        <begin position="1"/>
        <end position="155"/>
    </location>
</feature>
<feature type="binding site" evidence="1">
    <location>
        <position position="109"/>
    </location>
    <ligand>
        <name>Zn(2+)</name>
        <dbReference type="ChEBI" id="CHEBI:29105"/>
    </ligand>
</feature>
<feature type="binding site" evidence="1">
    <location>
        <position position="114"/>
    </location>
    <ligand>
        <name>Zn(2+)</name>
        <dbReference type="ChEBI" id="CHEBI:29105"/>
    </ligand>
</feature>
<feature type="binding site" evidence="1">
    <location>
        <position position="138"/>
    </location>
    <ligand>
        <name>Zn(2+)</name>
        <dbReference type="ChEBI" id="CHEBI:29105"/>
    </ligand>
</feature>
<feature type="binding site" evidence="1">
    <location>
        <position position="141"/>
    </location>
    <ligand>
        <name>Zn(2+)</name>
        <dbReference type="ChEBI" id="CHEBI:29105"/>
    </ligand>
</feature>
<name>PYRI_VIBC3</name>